<protein>
    <recommendedName>
        <fullName>1-aminocyclopropane-1-carboxylate oxidase 3</fullName>
        <shortName>ACC oxidase 3</shortName>
        <shortName>AtACO3</shortName>
        <ecNumber evidence="6">1.14.17.4</ecNumber>
    </recommendedName>
</protein>
<accession>O65378</accession>
<gene>
    <name type="ordered locus">At1g12010</name>
    <name type="ORF">F12F1.12</name>
</gene>
<keyword id="KW-0175">Coiled coil</keyword>
<keyword id="KW-0266">Ethylene biosynthesis</keyword>
<keyword id="KW-0408">Iron</keyword>
<keyword id="KW-0479">Metal-binding</keyword>
<keyword id="KW-0560">Oxidoreductase</keyword>
<keyword id="KW-0611">Plant defense</keyword>
<keyword id="KW-1185">Reference proteome</keyword>
<keyword id="KW-0847">Vitamin C</keyword>
<reference key="1">
    <citation type="journal article" date="2000" name="Nature">
        <title>Sequence and analysis of chromosome 1 of the plant Arabidopsis thaliana.</title>
        <authorList>
            <person name="Theologis A."/>
            <person name="Ecker J.R."/>
            <person name="Palm C.J."/>
            <person name="Federspiel N.A."/>
            <person name="Kaul S."/>
            <person name="White O."/>
            <person name="Alonso J."/>
            <person name="Altafi H."/>
            <person name="Araujo R."/>
            <person name="Bowman C.L."/>
            <person name="Brooks S.Y."/>
            <person name="Buehler E."/>
            <person name="Chan A."/>
            <person name="Chao Q."/>
            <person name="Chen H."/>
            <person name="Cheuk R.F."/>
            <person name="Chin C.W."/>
            <person name="Chung M.K."/>
            <person name="Conn L."/>
            <person name="Conway A.B."/>
            <person name="Conway A.R."/>
            <person name="Creasy T.H."/>
            <person name="Dewar K."/>
            <person name="Dunn P."/>
            <person name="Etgu P."/>
            <person name="Feldblyum T.V."/>
            <person name="Feng J.-D."/>
            <person name="Fong B."/>
            <person name="Fujii C.Y."/>
            <person name="Gill J.E."/>
            <person name="Goldsmith A.D."/>
            <person name="Haas B."/>
            <person name="Hansen N.F."/>
            <person name="Hughes B."/>
            <person name="Huizar L."/>
            <person name="Hunter J.L."/>
            <person name="Jenkins J."/>
            <person name="Johnson-Hopson C."/>
            <person name="Khan S."/>
            <person name="Khaykin E."/>
            <person name="Kim C.J."/>
            <person name="Koo H.L."/>
            <person name="Kremenetskaia I."/>
            <person name="Kurtz D.B."/>
            <person name="Kwan A."/>
            <person name="Lam B."/>
            <person name="Langin-Hooper S."/>
            <person name="Lee A."/>
            <person name="Lee J.M."/>
            <person name="Lenz C.A."/>
            <person name="Li J.H."/>
            <person name="Li Y.-P."/>
            <person name="Lin X."/>
            <person name="Liu S.X."/>
            <person name="Liu Z.A."/>
            <person name="Luros J.S."/>
            <person name="Maiti R."/>
            <person name="Marziali A."/>
            <person name="Militscher J."/>
            <person name="Miranda M."/>
            <person name="Nguyen M."/>
            <person name="Nierman W.C."/>
            <person name="Osborne B.I."/>
            <person name="Pai G."/>
            <person name="Peterson J."/>
            <person name="Pham P.K."/>
            <person name="Rizzo M."/>
            <person name="Rooney T."/>
            <person name="Rowley D."/>
            <person name="Sakano H."/>
            <person name="Salzberg S.L."/>
            <person name="Schwartz J.R."/>
            <person name="Shinn P."/>
            <person name="Southwick A.M."/>
            <person name="Sun H."/>
            <person name="Tallon L.J."/>
            <person name="Tambunga G."/>
            <person name="Toriumi M.J."/>
            <person name="Town C.D."/>
            <person name="Utterback T."/>
            <person name="Van Aken S."/>
            <person name="Vaysberg M."/>
            <person name="Vysotskaia V.S."/>
            <person name="Walker M."/>
            <person name="Wu D."/>
            <person name="Yu G."/>
            <person name="Fraser C.M."/>
            <person name="Venter J.C."/>
            <person name="Davis R.W."/>
        </authorList>
    </citation>
    <scope>NUCLEOTIDE SEQUENCE [LARGE SCALE GENOMIC DNA]</scope>
    <source>
        <strain>cv. Columbia</strain>
    </source>
</reference>
<reference key="2">
    <citation type="journal article" date="2017" name="Plant J.">
        <title>Araport11: a complete reannotation of the Arabidopsis thaliana reference genome.</title>
        <authorList>
            <person name="Cheng C.Y."/>
            <person name="Krishnakumar V."/>
            <person name="Chan A.P."/>
            <person name="Thibaud-Nissen F."/>
            <person name="Schobel S."/>
            <person name="Town C.D."/>
        </authorList>
    </citation>
    <scope>GENOME REANNOTATION</scope>
    <source>
        <strain>cv. Columbia</strain>
    </source>
</reference>
<reference key="3">
    <citation type="journal article" date="2003" name="Science">
        <title>Empirical analysis of transcriptional activity in the Arabidopsis genome.</title>
        <authorList>
            <person name="Yamada K."/>
            <person name="Lim J."/>
            <person name="Dale J.M."/>
            <person name="Chen H."/>
            <person name="Shinn P."/>
            <person name="Palm C.J."/>
            <person name="Southwick A.M."/>
            <person name="Wu H.C."/>
            <person name="Kim C.J."/>
            <person name="Nguyen M."/>
            <person name="Pham P.K."/>
            <person name="Cheuk R.F."/>
            <person name="Karlin-Newmann G."/>
            <person name="Liu S.X."/>
            <person name="Lam B."/>
            <person name="Sakano H."/>
            <person name="Wu T."/>
            <person name="Yu G."/>
            <person name="Miranda M."/>
            <person name="Quach H.L."/>
            <person name="Tripp M."/>
            <person name="Chang C.H."/>
            <person name="Lee J.M."/>
            <person name="Toriumi M.J."/>
            <person name="Chan M.M."/>
            <person name="Tang C.C."/>
            <person name="Onodera C.S."/>
            <person name="Deng J.M."/>
            <person name="Akiyama K."/>
            <person name="Ansari Y."/>
            <person name="Arakawa T."/>
            <person name="Banh J."/>
            <person name="Banno F."/>
            <person name="Bowser L."/>
            <person name="Brooks S.Y."/>
            <person name="Carninci P."/>
            <person name="Chao Q."/>
            <person name="Choy N."/>
            <person name="Enju A."/>
            <person name="Goldsmith A.D."/>
            <person name="Gurjal M."/>
            <person name="Hansen N.F."/>
            <person name="Hayashizaki Y."/>
            <person name="Johnson-Hopson C."/>
            <person name="Hsuan V.W."/>
            <person name="Iida K."/>
            <person name="Karnes M."/>
            <person name="Khan S."/>
            <person name="Koesema E."/>
            <person name="Ishida J."/>
            <person name="Jiang P.X."/>
            <person name="Jones T."/>
            <person name="Kawai J."/>
            <person name="Kamiya A."/>
            <person name="Meyers C."/>
            <person name="Nakajima M."/>
            <person name="Narusaka M."/>
            <person name="Seki M."/>
            <person name="Sakurai T."/>
            <person name="Satou M."/>
            <person name="Tamse R."/>
            <person name="Vaysberg M."/>
            <person name="Wallender E.K."/>
            <person name="Wong C."/>
            <person name="Yamamura Y."/>
            <person name="Yuan S."/>
            <person name="Shinozaki K."/>
            <person name="Davis R.W."/>
            <person name="Theologis A."/>
            <person name="Ecker J.R."/>
        </authorList>
    </citation>
    <scope>NUCLEOTIDE SEQUENCE [LARGE SCALE MRNA]</scope>
    <source>
        <strain>cv. Columbia</strain>
    </source>
</reference>
<reference key="4">
    <citation type="journal article" date="2007" name="Plant Cell">
        <title>Saturated very-long-chain fatty acids promote cotton fiber and Arabidopsis cell elongation by activating ethylene biosynthesis.</title>
        <authorList>
            <person name="Qin Y.-M."/>
            <person name="Hu C.-Y."/>
            <person name="Pang Y."/>
            <person name="Kastaniotis A.J."/>
            <person name="Hiltunen J.K."/>
            <person name="Zhu Y.-X."/>
        </authorList>
    </citation>
    <scope>FUNCTION</scope>
    <scope>INDUCTION BY VERY-LONG-CHAIN FATTY ACIDS</scope>
    <source>
        <strain>cv. Columbia</strain>
    </source>
</reference>
<reference key="5">
    <citation type="journal article" date="2009" name="Plant Mol. Biol.">
        <title>Antagonism between abscisic acid and ethylene in Arabidopsis acts in parallel with the reciprocal regulation of their metabolism and signaling pathways.</title>
        <authorList>
            <person name="Cheng W.-H."/>
            <person name="Chiang M.-H."/>
            <person name="Hwang S.-G."/>
            <person name="Lin P.-C."/>
        </authorList>
    </citation>
    <scope>FUNCTION</scope>
    <scope>CATALYTIC ACTIVITY</scope>
    <scope>DISRUPTION PHENOTYPE</scope>
    <source>
        <strain>cv. Columbia</strain>
        <strain>cv. Landsberg erecta</strain>
    </source>
</reference>
<organism>
    <name type="scientific">Arabidopsis thaliana</name>
    <name type="common">Mouse-ear cress</name>
    <dbReference type="NCBI Taxonomy" id="3702"/>
    <lineage>
        <taxon>Eukaryota</taxon>
        <taxon>Viridiplantae</taxon>
        <taxon>Streptophyta</taxon>
        <taxon>Embryophyta</taxon>
        <taxon>Tracheophyta</taxon>
        <taxon>Spermatophyta</taxon>
        <taxon>Magnoliopsida</taxon>
        <taxon>eudicotyledons</taxon>
        <taxon>Gunneridae</taxon>
        <taxon>Pentapetalae</taxon>
        <taxon>rosids</taxon>
        <taxon>malvids</taxon>
        <taxon>Brassicales</taxon>
        <taxon>Brassicaceae</taxon>
        <taxon>Camelineae</taxon>
        <taxon>Arabidopsis</taxon>
    </lineage>
</organism>
<dbReference type="EC" id="1.14.17.4" evidence="6"/>
<dbReference type="EMBL" id="AC002131">
    <property type="protein sequence ID" value="AAC17613.1"/>
    <property type="molecule type" value="Genomic_DNA"/>
</dbReference>
<dbReference type="EMBL" id="CP002684">
    <property type="protein sequence ID" value="AEE28826.1"/>
    <property type="molecule type" value="Genomic_DNA"/>
</dbReference>
<dbReference type="EMBL" id="AY052694">
    <property type="protein sequence ID" value="AAK96598.1"/>
    <property type="molecule type" value="mRNA"/>
</dbReference>
<dbReference type="EMBL" id="AF446874">
    <property type="protein sequence ID" value="AAL38607.1"/>
    <property type="molecule type" value="mRNA"/>
</dbReference>
<dbReference type="PIR" id="B86255">
    <property type="entry name" value="B86255"/>
</dbReference>
<dbReference type="RefSeq" id="NP_172665.1">
    <property type="nucleotide sequence ID" value="NM_101073.3"/>
</dbReference>
<dbReference type="SMR" id="O65378"/>
<dbReference type="FunCoup" id="O65378">
    <property type="interactions" value="122"/>
</dbReference>
<dbReference type="STRING" id="3702.O65378"/>
<dbReference type="PaxDb" id="3702-AT1G12010.1"/>
<dbReference type="ProteomicsDB" id="244383"/>
<dbReference type="EnsemblPlants" id="AT1G12010.1">
    <property type="protein sequence ID" value="AT1G12010.1"/>
    <property type="gene ID" value="AT1G12010"/>
</dbReference>
<dbReference type="GeneID" id="837753"/>
<dbReference type="Gramene" id="AT1G12010.1">
    <property type="protein sequence ID" value="AT1G12010.1"/>
    <property type="gene ID" value="AT1G12010"/>
</dbReference>
<dbReference type="KEGG" id="ath:AT1G12010"/>
<dbReference type="Araport" id="AT1G12010"/>
<dbReference type="TAIR" id="AT1G12010">
    <property type="gene designation" value="ACO3"/>
</dbReference>
<dbReference type="eggNOG" id="KOG0143">
    <property type="taxonomic scope" value="Eukaryota"/>
</dbReference>
<dbReference type="HOGENOM" id="CLU_010119_16_1_1"/>
<dbReference type="InParanoid" id="O65378"/>
<dbReference type="OMA" id="SKNVWFK"/>
<dbReference type="PhylomeDB" id="O65378"/>
<dbReference type="UniPathway" id="UPA00384">
    <property type="reaction ID" value="UER00563"/>
</dbReference>
<dbReference type="PRO" id="PR:O65378"/>
<dbReference type="Proteomes" id="UP000006548">
    <property type="component" value="Chromosome 1"/>
</dbReference>
<dbReference type="ExpressionAtlas" id="O65378">
    <property type="expression patterns" value="baseline and differential"/>
</dbReference>
<dbReference type="GO" id="GO:0005829">
    <property type="term" value="C:cytosol"/>
    <property type="evidence" value="ECO:0007005"/>
    <property type="project" value="TAIR"/>
</dbReference>
<dbReference type="GO" id="GO:0009815">
    <property type="term" value="F:1-aminocyclopropane-1-carboxylate oxidase activity"/>
    <property type="evidence" value="ECO:0000315"/>
    <property type="project" value="TAIR"/>
</dbReference>
<dbReference type="GO" id="GO:0031418">
    <property type="term" value="F:L-ascorbic acid binding"/>
    <property type="evidence" value="ECO:0007669"/>
    <property type="project" value="UniProtKB-KW"/>
</dbReference>
<dbReference type="GO" id="GO:0046872">
    <property type="term" value="F:metal ion binding"/>
    <property type="evidence" value="ECO:0007669"/>
    <property type="project" value="UniProtKB-KW"/>
</dbReference>
<dbReference type="GO" id="GO:0071398">
    <property type="term" value="P:cellular response to fatty acid"/>
    <property type="evidence" value="ECO:0000270"/>
    <property type="project" value="UniProtKB"/>
</dbReference>
<dbReference type="GO" id="GO:0006952">
    <property type="term" value="P:defense response"/>
    <property type="evidence" value="ECO:0007669"/>
    <property type="project" value="UniProtKB-KW"/>
</dbReference>
<dbReference type="GO" id="GO:0009693">
    <property type="term" value="P:ethylene biosynthetic process"/>
    <property type="evidence" value="ECO:0000315"/>
    <property type="project" value="TAIR"/>
</dbReference>
<dbReference type="FunFam" id="2.60.120.330:FF:000002">
    <property type="entry name" value="1-aminocyclopropane-1-carboxylate oxidase 1"/>
    <property type="match status" value="1"/>
</dbReference>
<dbReference type="Gene3D" id="2.60.120.330">
    <property type="entry name" value="B-lactam Antibiotic, Isopenicillin N Synthase, Chain"/>
    <property type="match status" value="1"/>
</dbReference>
<dbReference type="InterPro" id="IPR026992">
    <property type="entry name" value="DIOX_N"/>
</dbReference>
<dbReference type="InterPro" id="IPR044861">
    <property type="entry name" value="IPNS-like_FE2OG_OXY"/>
</dbReference>
<dbReference type="InterPro" id="IPR027443">
    <property type="entry name" value="IPNS-like_sf"/>
</dbReference>
<dbReference type="InterPro" id="IPR005123">
    <property type="entry name" value="Oxoglu/Fe-dep_dioxygenase_dom"/>
</dbReference>
<dbReference type="InterPro" id="IPR050295">
    <property type="entry name" value="Plant_2OG-oxidoreductases"/>
</dbReference>
<dbReference type="PANTHER" id="PTHR47991">
    <property type="entry name" value="OXOGLUTARATE/IRON-DEPENDENT DIOXYGENASE"/>
    <property type="match status" value="1"/>
</dbReference>
<dbReference type="Pfam" id="PF03171">
    <property type="entry name" value="2OG-FeII_Oxy"/>
    <property type="match status" value="1"/>
</dbReference>
<dbReference type="Pfam" id="PF14226">
    <property type="entry name" value="DIOX_N"/>
    <property type="match status" value="1"/>
</dbReference>
<dbReference type="SUPFAM" id="SSF51197">
    <property type="entry name" value="Clavaminate synthase-like"/>
    <property type="match status" value="1"/>
</dbReference>
<dbReference type="PROSITE" id="PS51471">
    <property type="entry name" value="FE2OG_OXY"/>
    <property type="match status" value="1"/>
</dbReference>
<name>ACCO3_ARATH</name>
<evidence type="ECO:0000255" key="1"/>
<evidence type="ECO:0000255" key="2">
    <source>
        <dbReference type="PROSITE-ProRule" id="PRU00805"/>
    </source>
</evidence>
<evidence type="ECO:0000269" key="3">
    <source>
    </source>
</evidence>
<evidence type="ECO:0000269" key="4">
    <source>
    </source>
</evidence>
<evidence type="ECO:0000305" key="5"/>
<evidence type="ECO:0000305" key="6">
    <source>
    </source>
</evidence>
<feature type="chain" id="PRO_0000408299" description="1-aminocyclopropane-1-carboxylate oxidase 3">
    <location>
        <begin position="1"/>
        <end position="320"/>
    </location>
</feature>
<feature type="domain" description="Fe2OG dioxygenase" evidence="2">
    <location>
        <begin position="155"/>
        <end position="256"/>
    </location>
</feature>
<feature type="coiled-coil region" evidence="1">
    <location>
        <begin position="111"/>
        <end position="131"/>
    </location>
</feature>
<feature type="binding site" evidence="2">
    <location>
        <position position="180"/>
    </location>
    <ligand>
        <name>Fe cation</name>
        <dbReference type="ChEBI" id="CHEBI:24875"/>
    </ligand>
</feature>
<feature type="binding site" evidence="2">
    <location>
        <position position="182"/>
    </location>
    <ligand>
        <name>Fe cation</name>
        <dbReference type="ChEBI" id="CHEBI:24875"/>
    </ligand>
</feature>
<feature type="binding site" evidence="2">
    <location>
        <position position="237"/>
    </location>
    <ligand>
        <name>Fe cation</name>
        <dbReference type="ChEBI" id="CHEBI:24875"/>
    </ligand>
</feature>
<feature type="binding site" evidence="2">
    <location>
        <position position="247"/>
    </location>
    <ligand>
        <name>2-oxoglutarate</name>
        <dbReference type="ChEBI" id="CHEBI:16810"/>
    </ligand>
</feature>
<comment type="function">
    <text evidence="3 4">Enzyme involved in the ethylene biosynthesis. May promote stem elongation by maximizing the extensibility cells, possibly by activating ethylene biosynthesis, in response to very-long-chain fatty acids (VLCFAs C20:0 to C30:0).</text>
</comment>
<comment type="catalytic activity">
    <reaction evidence="6">
        <text>1-aminocyclopropane-1-carboxylate + L-ascorbate + O2 = ethene + L-dehydroascorbate + hydrogen cyanide + CO2 + 2 H2O</text>
        <dbReference type="Rhea" id="RHEA:23640"/>
        <dbReference type="ChEBI" id="CHEBI:15377"/>
        <dbReference type="ChEBI" id="CHEBI:15379"/>
        <dbReference type="ChEBI" id="CHEBI:16526"/>
        <dbReference type="ChEBI" id="CHEBI:18153"/>
        <dbReference type="ChEBI" id="CHEBI:18407"/>
        <dbReference type="ChEBI" id="CHEBI:38290"/>
        <dbReference type="ChEBI" id="CHEBI:58360"/>
        <dbReference type="ChEBI" id="CHEBI:58539"/>
        <dbReference type="EC" id="1.14.17.4"/>
    </reaction>
    <physiologicalReaction direction="left-to-right" evidence="6">
        <dbReference type="Rhea" id="RHEA:23641"/>
    </physiologicalReaction>
</comment>
<comment type="cofactor">
    <cofactor evidence="2">
        <name>Fe(2+)</name>
        <dbReference type="ChEBI" id="CHEBI:29033"/>
    </cofactor>
    <text evidence="2">Binds 1 Fe(2+) ion per subunit.</text>
</comment>
<comment type="pathway">
    <text>Alkene biosynthesis; ethylene biosynthesis via S-adenosyl-L-methionine; ethylene from S-adenosyl-L-methionine: step 2/2.</text>
</comment>
<comment type="induction">
    <text evidence="3">Accumulates in response to very-long-chain fatty acids (VLCFAs C20:0 to C30:0).</text>
</comment>
<comment type="disruption phenotype">
    <text evidence="4">Reduced ethylene levels.</text>
</comment>
<comment type="similarity">
    <text evidence="5">Belongs to the iron/ascorbate-dependent oxidoreductase family.</text>
</comment>
<sequence>MEMNIKFPVIDLSKLNGEERDQTMALIDDACQNWGFFELVNHGLPYDLMDNIERMTKEHYKKHMEQKFKEMLRSKGLDTLETEVEDVDWESTFYLHHLPQSNLYDIPDMSNEYRLAMKDFGKRLEILAEELLDLLCENLGLEKGYLKKVFHGTTGPTFATKLSNYPPCPKPEMIKGLRAHTDAGGLILLFQDDKVSGLQLLKDGDWVDVPPLKHSIVINLGDQLEVITNGKYKSVMHRVMTQKEGNRMSIASFYNPGSDAEISPATSLVDKDSKYPSFVFDDYMKLYAGLKFQAKEPRFEAMKNAEAAADLNPVAVVETF</sequence>
<proteinExistence type="evidence at protein level"/>